<protein>
    <recommendedName>
        <fullName>Uncharacterized 36.2 kDa protein</fullName>
    </recommendedName>
</protein>
<organism>
    <name type="scientific">Orgyia pseudotsugata multicapsid polyhedrosis virus</name>
    <name type="common">OpMNPV</name>
    <dbReference type="NCBI Taxonomy" id="262177"/>
    <lineage>
        <taxon>Viruses</taxon>
        <taxon>Viruses incertae sedis</taxon>
        <taxon>Naldaviricetes</taxon>
        <taxon>Lefavirales</taxon>
        <taxon>Baculoviridae</taxon>
        <taxon>Alphabaculovirus</taxon>
        <taxon>Alphabaculovirus orpseudotsugatae</taxon>
    </lineage>
</organism>
<feature type="chain" id="PRO_0000132983" description="Uncharacterized 36.2 kDa protein">
    <location>
        <begin position="1"/>
        <end position="318"/>
    </location>
</feature>
<accession>O10309</accession>
<keyword id="KW-1185">Reference proteome</keyword>
<gene>
    <name type="ORF">ORF55</name>
</gene>
<reference key="1">
    <citation type="journal article" date="1997" name="Virology">
        <title>The sequence of the Orgyia pseudotsugata multinucleocapsid nuclear polyhedrosis virus genome.</title>
        <authorList>
            <person name="Ahrens C.H."/>
            <person name="Russell R.R."/>
            <person name="Funk C.J."/>
            <person name="Evans J."/>
            <person name="Harwood S."/>
            <person name="Rohrmann G.F."/>
        </authorList>
    </citation>
    <scope>NUCLEOTIDE SEQUENCE [LARGE SCALE GENOMIC DNA]</scope>
</reference>
<organismHost>
    <name type="scientific">Orgyia pseudotsugata</name>
    <name type="common">Douglas-fir tussock moth</name>
    <dbReference type="NCBI Taxonomy" id="33414"/>
</organismHost>
<name>Y051_NPVOP</name>
<sequence length="318" mass="36234">MATSTRSRKRGAEPDTEVVKRAKQNKLCSLQNNDFLGFCSLREINYYETLKLDFERNFEAPQNDADFALLVARKANFVANQVRRYPSVTDAHHNNAVHDVLILIQHARAVLMDKNKRRRYDDIVAHKNSNVLKICDTFISQLDQINVDLSAALVAFKTASSSLSGGAANDITSALVEALENWLAAQPVVMRRPSSMNRVLITWPPLLEEQVYTKFQTEQLIRQELLASASIKSEDIVNVFVCDINAVVVEFKTQEQQLAAMKIDEIKSNRFTVKPYILKNFYNAQLSRRLSDEMNAIDIRAQNIREQLKTVHARYSQS</sequence>
<dbReference type="EMBL" id="U75930">
    <property type="protein sequence ID" value="AAC59054.1"/>
    <property type="molecule type" value="Genomic_DNA"/>
</dbReference>
<dbReference type="RefSeq" id="NP_046211.1">
    <property type="nucleotide sequence ID" value="NC_001875.2"/>
</dbReference>
<dbReference type="KEGG" id="vg:912035"/>
<dbReference type="OrthoDB" id="6023at10239"/>
<dbReference type="Proteomes" id="UP000009248">
    <property type="component" value="Genome"/>
</dbReference>
<proteinExistence type="predicted"/>